<sequence>MRFKGLDLNLLVVLDALLTERTLTAAASSINLSQPAMSAAVARLRDYFNDELFTTSGRERVLTPRAETLAPAVRSALLQIQCSIISWDPFNPAQSDRRFRIILSDFATLVFFEKVVERVAREAPAVSFELLPIDDDPDELLRRGDVDFLIFPELFMSSAHPRAALFDETLVCVGCSTNKQLPRQLTFERYMSMRHVAVKFGRTLKPSIEEQFFLEHGLKRRVEIVVQAFSMIPPMVSGTARIATMPFRLVQHFKKTFPLRIIELPLPLPTFTEAVQWPALHNSDPASIWLREILLQEASRMTSPGDAKRRPRQP</sequence>
<accession>Q52838</accession>
<organism>
    <name type="scientific">Mesorhizobium japonicum (strain LMG 29417 / CECT 9101 / MAFF 303099)</name>
    <name type="common">Mesorhizobium loti (strain MAFF 303099)</name>
    <dbReference type="NCBI Taxonomy" id="266835"/>
    <lineage>
        <taxon>Bacteria</taxon>
        <taxon>Pseudomonadati</taxon>
        <taxon>Pseudomonadota</taxon>
        <taxon>Alphaproteobacteria</taxon>
        <taxon>Hyphomicrobiales</taxon>
        <taxon>Phyllobacteriaceae</taxon>
        <taxon>Mesorhizobium</taxon>
    </lineage>
</organism>
<name>NODD1_RHILO</name>
<evidence type="ECO:0000255" key="1">
    <source>
        <dbReference type="PROSITE-ProRule" id="PRU00253"/>
    </source>
</evidence>
<evidence type="ECO:0000305" key="2"/>
<keyword id="KW-0010">Activator</keyword>
<keyword id="KW-0238">DNA-binding</keyword>
<keyword id="KW-0536">Nodulation</keyword>
<keyword id="KW-0678">Repressor</keyword>
<keyword id="KW-0804">Transcription</keyword>
<keyword id="KW-0805">Transcription regulation</keyword>
<gene>
    <name type="primary">nodD1</name>
    <name type="synonym">nodD</name>
    <name type="ordered locus">mll6179</name>
</gene>
<proteinExistence type="inferred from homology"/>
<reference key="1">
    <citation type="journal article" date="2000" name="DNA Res.">
        <title>Complete genome structure of the nitrogen-fixing symbiotic bacterium Mesorhizobium loti.</title>
        <authorList>
            <person name="Kaneko T."/>
            <person name="Nakamura Y."/>
            <person name="Sato S."/>
            <person name="Asamizu E."/>
            <person name="Kato T."/>
            <person name="Sasamoto S."/>
            <person name="Watanabe A."/>
            <person name="Idesawa K."/>
            <person name="Ishikawa A."/>
            <person name="Kawashima K."/>
            <person name="Kimura T."/>
            <person name="Kishida Y."/>
            <person name="Kiyokawa C."/>
            <person name="Kohara M."/>
            <person name="Matsumoto M."/>
            <person name="Matsuno A."/>
            <person name="Mochizuki Y."/>
            <person name="Nakayama S."/>
            <person name="Nakazaki N."/>
            <person name="Shimpo S."/>
            <person name="Sugimoto M."/>
            <person name="Takeuchi C."/>
            <person name="Yamada M."/>
            <person name="Tabata S."/>
        </authorList>
    </citation>
    <scope>NUCLEOTIDE SEQUENCE [LARGE SCALE GENOMIC DNA]</scope>
    <source>
        <strain>LMG 29417 / CECT 9101 / MAFF 303099</strain>
    </source>
</reference>
<reference key="2">
    <citation type="journal article" date="1996" name="Mol. Plant Microbe Interact.">
        <title>Novel and complex chromosomal arrangement of Rhizobium loti nodulation genes.</title>
        <authorList>
            <person name="Scott D.B."/>
            <person name="Young C.A."/>
            <person name="Collins-Emerson J.M."/>
            <person name="Terzaghi E.A."/>
            <person name="Rockman E.S."/>
            <person name="Lewis P.E."/>
            <person name="Pankhurst C.E."/>
        </authorList>
    </citation>
    <scope>NUCLEOTIDE SEQUENCE [GENOMIC DNA] OF 1-18</scope>
    <source>
        <strain>NZP 2213</strain>
    </source>
</reference>
<protein>
    <recommendedName>
        <fullName>Nodulation protein D 1</fullName>
    </recommendedName>
</protein>
<feature type="chain" id="PRO_0000105710" description="Nodulation protein D 1">
    <location>
        <begin position="1"/>
        <end position="314"/>
    </location>
</feature>
<feature type="domain" description="HTH lysR-type" evidence="1">
    <location>
        <begin position="6"/>
        <end position="63"/>
    </location>
</feature>
<feature type="DNA-binding region" description="H-T-H motif" evidence="1">
    <location>
        <begin position="23"/>
        <end position="42"/>
    </location>
</feature>
<feature type="sequence conflict" description="In Ref. 2; AAB47350." evidence="2" ref="2">
    <original>LDALL</original>
    <variation>PDWPR</variation>
    <location>
        <begin position="14"/>
        <end position="18"/>
    </location>
</feature>
<comment type="function">
    <text>NodD regulates the expression of the nodABCFE genes which encode other nodulation proteins. NodD is also a negative regulator of its own expression. Binds flavenoids as inducers.</text>
</comment>
<comment type="similarity">
    <text evidence="2">Belongs to the LysR transcriptional regulatory family.</text>
</comment>
<dbReference type="EMBL" id="BA000012">
    <property type="protein sequence ID" value="BAB52513.1"/>
    <property type="molecule type" value="Genomic_DNA"/>
</dbReference>
<dbReference type="EMBL" id="L06241">
    <property type="protein sequence ID" value="AAB47350.1"/>
    <property type="molecule type" value="Genomic_DNA"/>
</dbReference>
<dbReference type="RefSeq" id="WP_010913834.1">
    <property type="nucleotide sequence ID" value="NC_002678.2"/>
</dbReference>
<dbReference type="SMR" id="Q52838"/>
<dbReference type="KEGG" id="mlo:mll6179"/>
<dbReference type="eggNOG" id="COG0583">
    <property type="taxonomic scope" value="Bacteria"/>
</dbReference>
<dbReference type="HOGENOM" id="CLU_039613_39_0_5"/>
<dbReference type="Proteomes" id="UP000000552">
    <property type="component" value="Chromosome"/>
</dbReference>
<dbReference type="GO" id="GO:0003677">
    <property type="term" value="F:DNA binding"/>
    <property type="evidence" value="ECO:0007669"/>
    <property type="project" value="UniProtKB-KW"/>
</dbReference>
<dbReference type="GO" id="GO:0003700">
    <property type="term" value="F:DNA-binding transcription factor activity"/>
    <property type="evidence" value="ECO:0007669"/>
    <property type="project" value="InterPro"/>
</dbReference>
<dbReference type="CDD" id="cd08462">
    <property type="entry name" value="PBP2_NodD"/>
    <property type="match status" value="1"/>
</dbReference>
<dbReference type="Gene3D" id="3.40.190.10">
    <property type="entry name" value="Periplasmic binding protein-like II"/>
    <property type="match status" value="2"/>
</dbReference>
<dbReference type="Gene3D" id="1.10.10.10">
    <property type="entry name" value="Winged helix-like DNA-binding domain superfamily/Winged helix DNA-binding domain"/>
    <property type="match status" value="1"/>
</dbReference>
<dbReference type="InterPro" id="IPR050389">
    <property type="entry name" value="LysR-type_TF"/>
</dbReference>
<dbReference type="InterPro" id="IPR005119">
    <property type="entry name" value="LysR_subst-bd"/>
</dbReference>
<dbReference type="InterPro" id="IPR037416">
    <property type="entry name" value="NodD_PBP2"/>
</dbReference>
<dbReference type="InterPro" id="IPR000847">
    <property type="entry name" value="Tscrpt_reg_HTH_LysR"/>
</dbReference>
<dbReference type="InterPro" id="IPR036388">
    <property type="entry name" value="WH-like_DNA-bd_sf"/>
</dbReference>
<dbReference type="InterPro" id="IPR036390">
    <property type="entry name" value="WH_DNA-bd_sf"/>
</dbReference>
<dbReference type="PANTHER" id="PTHR30118:SF6">
    <property type="entry name" value="HTH-TYPE TRANSCRIPTIONAL REGULATOR LEUO"/>
    <property type="match status" value="1"/>
</dbReference>
<dbReference type="PANTHER" id="PTHR30118">
    <property type="entry name" value="HTH-TYPE TRANSCRIPTIONAL REGULATOR LEUO-RELATED"/>
    <property type="match status" value="1"/>
</dbReference>
<dbReference type="Pfam" id="PF00126">
    <property type="entry name" value="HTH_1"/>
    <property type="match status" value="1"/>
</dbReference>
<dbReference type="Pfam" id="PF03466">
    <property type="entry name" value="LysR_substrate"/>
    <property type="match status" value="1"/>
</dbReference>
<dbReference type="PRINTS" id="PR00039">
    <property type="entry name" value="HTHLYSR"/>
</dbReference>
<dbReference type="SUPFAM" id="SSF53850">
    <property type="entry name" value="Periplasmic binding protein-like II"/>
    <property type="match status" value="1"/>
</dbReference>
<dbReference type="SUPFAM" id="SSF46785">
    <property type="entry name" value="Winged helix' DNA-binding domain"/>
    <property type="match status" value="1"/>
</dbReference>
<dbReference type="PROSITE" id="PS50931">
    <property type="entry name" value="HTH_LYSR"/>
    <property type="match status" value="1"/>
</dbReference>